<proteinExistence type="inferred from homology"/>
<gene>
    <name evidence="1" type="primary">glnD</name>
    <name type="ordered locus">Z0177</name>
    <name type="ordered locus">ECs0169</name>
</gene>
<comment type="function">
    <text evidence="1">Modifies, by uridylylation and deuridylylation, the PII regulatory proteins (GlnB and homologs), in response to the nitrogen status of the cell that GlnD senses through the glutamine level. Under low glutamine levels, catalyzes the conversion of the PII proteins and UTP to PII-UMP and PPi, while under higher glutamine levels, GlnD hydrolyzes PII-UMP to PII and UMP (deuridylylation). Thus, controls uridylylation state and activity of the PII proteins, and plays an important role in the regulation of nitrogen assimilation and metabolism.</text>
</comment>
<comment type="catalytic activity">
    <reaction evidence="1">
        <text>[protein-PII]-L-tyrosine + UTP = [protein-PII]-uridylyl-L-tyrosine + diphosphate</text>
        <dbReference type="Rhea" id="RHEA:13673"/>
        <dbReference type="Rhea" id="RHEA-COMP:12147"/>
        <dbReference type="Rhea" id="RHEA-COMP:12148"/>
        <dbReference type="ChEBI" id="CHEBI:33019"/>
        <dbReference type="ChEBI" id="CHEBI:46398"/>
        <dbReference type="ChEBI" id="CHEBI:46858"/>
        <dbReference type="ChEBI" id="CHEBI:90602"/>
        <dbReference type="EC" id="2.7.7.59"/>
    </reaction>
</comment>
<comment type="catalytic activity">
    <reaction evidence="1">
        <text>[protein-PII]-uridylyl-L-tyrosine + H2O = [protein-PII]-L-tyrosine + UMP + H(+)</text>
        <dbReference type="Rhea" id="RHEA:48600"/>
        <dbReference type="Rhea" id="RHEA-COMP:12147"/>
        <dbReference type="Rhea" id="RHEA-COMP:12148"/>
        <dbReference type="ChEBI" id="CHEBI:15377"/>
        <dbReference type="ChEBI" id="CHEBI:15378"/>
        <dbReference type="ChEBI" id="CHEBI:46858"/>
        <dbReference type="ChEBI" id="CHEBI:57865"/>
        <dbReference type="ChEBI" id="CHEBI:90602"/>
    </reaction>
</comment>
<comment type="cofactor">
    <cofactor evidence="1">
        <name>Mg(2+)</name>
        <dbReference type="ChEBI" id="CHEBI:18420"/>
    </cofactor>
</comment>
<comment type="activity regulation">
    <text evidence="1">Uridylyltransferase (UTase) activity is inhibited by glutamine, while glutamine activates uridylyl-removing (UR) activity.</text>
</comment>
<comment type="domain">
    <text evidence="1">Has four distinct domains: an N-terminal nucleotidyltransferase (NT) domain responsible for UTase activity, a central HD domain that encodes UR activity, and two C-terminal ACT domains that seem to have a role in glutamine sensing.</text>
</comment>
<comment type="similarity">
    <text evidence="1">Belongs to the GlnD family.</text>
</comment>
<accession>Q8X8Y6</accession>
<reference key="1">
    <citation type="journal article" date="2001" name="Nature">
        <title>Genome sequence of enterohaemorrhagic Escherichia coli O157:H7.</title>
        <authorList>
            <person name="Perna N.T."/>
            <person name="Plunkett G. III"/>
            <person name="Burland V."/>
            <person name="Mau B."/>
            <person name="Glasner J.D."/>
            <person name="Rose D.J."/>
            <person name="Mayhew G.F."/>
            <person name="Evans P.S."/>
            <person name="Gregor J."/>
            <person name="Kirkpatrick H.A."/>
            <person name="Posfai G."/>
            <person name="Hackett J."/>
            <person name="Klink S."/>
            <person name="Boutin A."/>
            <person name="Shao Y."/>
            <person name="Miller L."/>
            <person name="Grotbeck E.J."/>
            <person name="Davis N.W."/>
            <person name="Lim A."/>
            <person name="Dimalanta E.T."/>
            <person name="Potamousis K."/>
            <person name="Apodaca J."/>
            <person name="Anantharaman T.S."/>
            <person name="Lin J."/>
            <person name="Yen G."/>
            <person name="Schwartz D.C."/>
            <person name="Welch R.A."/>
            <person name="Blattner F.R."/>
        </authorList>
    </citation>
    <scope>NUCLEOTIDE SEQUENCE [LARGE SCALE GENOMIC DNA]</scope>
    <source>
        <strain>O157:H7 / EDL933 / ATCC 700927 / EHEC</strain>
    </source>
</reference>
<reference key="2">
    <citation type="journal article" date="2001" name="DNA Res.">
        <title>Complete genome sequence of enterohemorrhagic Escherichia coli O157:H7 and genomic comparison with a laboratory strain K-12.</title>
        <authorList>
            <person name="Hayashi T."/>
            <person name="Makino K."/>
            <person name="Ohnishi M."/>
            <person name="Kurokawa K."/>
            <person name="Ishii K."/>
            <person name="Yokoyama K."/>
            <person name="Han C.-G."/>
            <person name="Ohtsubo E."/>
            <person name="Nakayama K."/>
            <person name="Murata T."/>
            <person name="Tanaka M."/>
            <person name="Tobe T."/>
            <person name="Iida T."/>
            <person name="Takami H."/>
            <person name="Honda T."/>
            <person name="Sasakawa C."/>
            <person name="Ogasawara N."/>
            <person name="Yasunaga T."/>
            <person name="Kuhara S."/>
            <person name="Shiba T."/>
            <person name="Hattori M."/>
            <person name="Shinagawa H."/>
        </authorList>
    </citation>
    <scope>NUCLEOTIDE SEQUENCE [LARGE SCALE GENOMIC DNA]</scope>
    <source>
        <strain>O157:H7 / Sakai / RIMD 0509952 / EHEC</strain>
    </source>
</reference>
<sequence length="890" mass="102422">MNTLPEQYANTALPTLPGQPQNPCVWPRDELTVGGIKAHIDTFQRWLGDAFDNGISAEQLIEARTEFIDQLLQRLWIEAGFSQIADLALVAVGGYGRGELHPLSDIDLLILSRKKLPDDQAQKVGELLTLLWDVKLEVGHSVRTLEECMLEGLSDLTVATNLIESRLLIGDVALFLELQKHIFSEGFWPSDKFYAAKVEEQNQRHQRYHGTSYNLEPDIKSSPGGLRDIHTLQWVARRHFGATSLDEMVGFGFLTSAERAELNECLHILWRIRFALHLVVSRYDNRLLFDRQLSVAQRLNYSGEGNEPVERMMKDYFRVTRRVSELNQMLLQLFDEAILALPADEKPRPIDDEFQLRGTLIDLRDETLFMRQPEAILRMFYTMVRNSAITGIYSTTLRQLRHARRHLQQPLCNIPQARKLFLSILRHPGAVRRGLLPMHRHSVLGAYMPQWSHIVGQMQFDLFHAYTVDEHTIRVMLKLESFASEETRQRHPLCVNVWPRLPSTELIFIAALFHDIAKGRGGDHSILGAQDVVHFAELHGLNSRETQLVAWLVRQHLLMSVTAQRRDIQDPEVIKQFAEEVQTENRLRYLVCLTVADICATNETLWNSWKQSLLRELYFATEKQLRRGMQNTPDMRERVRHHQLQALALLRMDNIDEEVLHQIWSRCRANYFVRHSPNQLAWHARHLLQHDLSKPLVLLSPQATRGGTEIFIWSPDRPYLFAAVCAELDRRNLSVHDAQIFTTRDGMAMDTFIVLEPDGSPLSADRHEVIRFGLEQVLTQSSWQPPQPRRQPAKLRHFTVETEVTFLPTHTDRKSFLELIALDQPGLLARVGKIFADLGISLHGARITTIGERVEDLFIIATADRRALNNELQQEVHQRLTEALNPNDKG</sequence>
<name>GLND_ECO57</name>
<protein>
    <recommendedName>
        <fullName evidence="1">Bifunctional uridylyltransferase/uridylyl-removing enzyme</fullName>
        <shortName evidence="1">UTase/UR</shortName>
    </recommendedName>
    <alternativeName>
        <fullName evidence="1">Bifunctional [protein-PII] modification enzyme</fullName>
    </alternativeName>
    <alternativeName>
        <fullName evidence="1">Bifunctional nitrogen sensor protein</fullName>
    </alternativeName>
    <domain>
        <recommendedName>
            <fullName evidence="1">[Protein-PII] uridylyltransferase</fullName>
            <shortName evidence="1">PII uridylyltransferase</shortName>
            <shortName evidence="1">UTase</shortName>
            <ecNumber evidence="1">2.7.7.59</ecNumber>
        </recommendedName>
    </domain>
    <domain>
        <recommendedName>
            <fullName evidence="1">[Protein-PII]-UMP uridylyl-removing enzyme</fullName>
            <shortName evidence="1">UR</shortName>
            <ecNumber evidence="1">3.1.4.-</ecNumber>
        </recommendedName>
    </domain>
</protein>
<organism>
    <name type="scientific">Escherichia coli O157:H7</name>
    <dbReference type="NCBI Taxonomy" id="83334"/>
    <lineage>
        <taxon>Bacteria</taxon>
        <taxon>Pseudomonadati</taxon>
        <taxon>Pseudomonadota</taxon>
        <taxon>Gammaproteobacteria</taxon>
        <taxon>Enterobacterales</taxon>
        <taxon>Enterobacteriaceae</taxon>
        <taxon>Escherichia</taxon>
    </lineage>
</organism>
<dbReference type="EC" id="2.7.7.59" evidence="1"/>
<dbReference type="EC" id="3.1.4.-" evidence="1"/>
<dbReference type="EMBL" id="AE005174">
    <property type="protein sequence ID" value="AAG54469.1"/>
    <property type="molecule type" value="Genomic_DNA"/>
</dbReference>
<dbReference type="EMBL" id="BA000007">
    <property type="protein sequence ID" value="BAB33592.1"/>
    <property type="molecule type" value="Genomic_DNA"/>
</dbReference>
<dbReference type="PIR" id="A85501">
    <property type="entry name" value="A85501"/>
</dbReference>
<dbReference type="PIR" id="A90650">
    <property type="entry name" value="A90650"/>
</dbReference>
<dbReference type="RefSeq" id="NP_308196.1">
    <property type="nucleotide sequence ID" value="NC_002695.1"/>
</dbReference>
<dbReference type="RefSeq" id="WP_001094581.1">
    <property type="nucleotide sequence ID" value="NZ_VOAI01000002.1"/>
</dbReference>
<dbReference type="SMR" id="Q8X8Y6"/>
<dbReference type="STRING" id="155864.Z0177"/>
<dbReference type="GeneID" id="913839"/>
<dbReference type="KEGG" id="ece:Z0177"/>
<dbReference type="KEGG" id="ecs:ECs_0169"/>
<dbReference type="PATRIC" id="fig|386585.9.peg.270"/>
<dbReference type="eggNOG" id="COG2844">
    <property type="taxonomic scope" value="Bacteria"/>
</dbReference>
<dbReference type="HOGENOM" id="CLU_012833_0_0_6"/>
<dbReference type="OMA" id="GLMQFDL"/>
<dbReference type="Proteomes" id="UP000000558">
    <property type="component" value="Chromosome"/>
</dbReference>
<dbReference type="Proteomes" id="UP000002519">
    <property type="component" value="Chromosome"/>
</dbReference>
<dbReference type="GO" id="GO:0008773">
    <property type="term" value="F:[protein-PII] uridylyltransferase activity"/>
    <property type="evidence" value="ECO:0007669"/>
    <property type="project" value="UniProtKB-UniRule"/>
</dbReference>
<dbReference type="GO" id="GO:0008081">
    <property type="term" value="F:phosphoric diester hydrolase activity"/>
    <property type="evidence" value="ECO:0007669"/>
    <property type="project" value="UniProtKB-UniRule"/>
</dbReference>
<dbReference type="GO" id="GO:0006808">
    <property type="term" value="P:regulation of nitrogen utilization"/>
    <property type="evidence" value="ECO:0007669"/>
    <property type="project" value="UniProtKB-UniRule"/>
</dbReference>
<dbReference type="CDD" id="cd04899">
    <property type="entry name" value="ACT_ACR-UUR-like_2"/>
    <property type="match status" value="1"/>
</dbReference>
<dbReference type="CDD" id="cd04900">
    <property type="entry name" value="ACT_UUR-like_1"/>
    <property type="match status" value="1"/>
</dbReference>
<dbReference type="CDD" id="cd00077">
    <property type="entry name" value="HDc"/>
    <property type="match status" value="1"/>
</dbReference>
<dbReference type="CDD" id="cd05401">
    <property type="entry name" value="NT_GlnE_GlnD_like"/>
    <property type="match status" value="1"/>
</dbReference>
<dbReference type="FunFam" id="1.10.3210.10:FF:000005">
    <property type="entry name" value="Bifunctional uridylyltransferase/uridylyl-removing enzyme"/>
    <property type="match status" value="1"/>
</dbReference>
<dbReference type="Gene3D" id="1.10.3210.10">
    <property type="entry name" value="Hypothetical protein af1432"/>
    <property type="match status" value="1"/>
</dbReference>
<dbReference type="HAMAP" id="MF_00277">
    <property type="entry name" value="PII_uridylyl_transf"/>
    <property type="match status" value="1"/>
</dbReference>
<dbReference type="InterPro" id="IPR045865">
    <property type="entry name" value="ACT-like_dom_sf"/>
</dbReference>
<dbReference type="InterPro" id="IPR002912">
    <property type="entry name" value="ACT_dom"/>
</dbReference>
<dbReference type="InterPro" id="IPR003607">
    <property type="entry name" value="HD/PDEase_dom"/>
</dbReference>
<dbReference type="InterPro" id="IPR006674">
    <property type="entry name" value="HD_domain"/>
</dbReference>
<dbReference type="InterPro" id="IPR043519">
    <property type="entry name" value="NT_sf"/>
</dbReference>
<dbReference type="InterPro" id="IPR013546">
    <property type="entry name" value="PII_UdlTrfase/GS_AdlTrfase"/>
</dbReference>
<dbReference type="InterPro" id="IPR002934">
    <property type="entry name" value="Polymerase_NTP_transf_dom"/>
</dbReference>
<dbReference type="InterPro" id="IPR010043">
    <property type="entry name" value="UTase/UR"/>
</dbReference>
<dbReference type="NCBIfam" id="NF002487">
    <property type="entry name" value="PRK01759.1"/>
    <property type="match status" value="1"/>
</dbReference>
<dbReference type="NCBIfam" id="NF003448">
    <property type="entry name" value="PRK05007.1"/>
    <property type="match status" value="1"/>
</dbReference>
<dbReference type="NCBIfam" id="TIGR01693">
    <property type="entry name" value="UTase_glnD"/>
    <property type="match status" value="1"/>
</dbReference>
<dbReference type="PANTHER" id="PTHR47320">
    <property type="entry name" value="BIFUNCTIONAL URIDYLYLTRANSFERASE/URIDYLYL-REMOVING ENZYME"/>
    <property type="match status" value="1"/>
</dbReference>
<dbReference type="PANTHER" id="PTHR47320:SF1">
    <property type="entry name" value="BIFUNCTIONAL URIDYLYLTRANSFERASE_URIDYLYL-REMOVING ENZYME"/>
    <property type="match status" value="1"/>
</dbReference>
<dbReference type="Pfam" id="PF01842">
    <property type="entry name" value="ACT"/>
    <property type="match status" value="2"/>
</dbReference>
<dbReference type="Pfam" id="PF08335">
    <property type="entry name" value="GlnD_UR_UTase"/>
    <property type="match status" value="1"/>
</dbReference>
<dbReference type="Pfam" id="PF01966">
    <property type="entry name" value="HD"/>
    <property type="match status" value="1"/>
</dbReference>
<dbReference type="Pfam" id="PF01909">
    <property type="entry name" value="NTP_transf_2"/>
    <property type="match status" value="1"/>
</dbReference>
<dbReference type="PIRSF" id="PIRSF006288">
    <property type="entry name" value="PII_uridyltransf"/>
    <property type="match status" value="1"/>
</dbReference>
<dbReference type="SMART" id="SM00471">
    <property type="entry name" value="HDc"/>
    <property type="match status" value="1"/>
</dbReference>
<dbReference type="SUPFAM" id="SSF55021">
    <property type="entry name" value="ACT-like"/>
    <property type="match status" value="2"/>
</dbReference>
<dbReference type="SUPFAM" id="SSF109604">
    <property type="entry name" value="HD-domain/PDEase-like"/>
    <property type="match status" value="1"/>
</dbReference>
<dbReference type="SUPFAM" id="SSF81301">
    <property type="entry name" value="Nucleotidyltransferase"/>
    <property type="match status" value="1"/>
</dbReference>
<dbReference type="SUPFAM" id="SSF81593">
    <property type="entry name" value="Nucleotidyltransferase substrate binding subunit/domain"/>
    <property type="match status" value="1"/>
</dbReference>
<dbReference type="PROSITE" id="PS51671">
    <property type="entry name" value="ACT"/>
    <property type="match status" value="2"/>
</dbReference>
<dbReference type="PROSITE" id="PS51831">
    <property type="entry name" value="HD"/>
    <property type="match status" value="1"/>
</dbReference>
<feature type="chain" id="PRO_0000192733" description="Bifunctional uridylyltransferase/uridylyl-removing enzyme">
    <location>
        <begin position="1"/>
        <end position="890"/>
    </location>
</feature>
<feature type="domain" description="HD" evidence="2">
    <location>
        <begin position="468"/>
        <end position="590"/>
    </location>
</feature>
<feature type="domain" description="ACT 1" evidence="1">
    <location>
        <begin position="709"/>
        <end position="789"/>
    </location>
</feature>
<feature type="domain" description="ACT 2" evidence="1">
    <location>
        <begin position="816"/>
        <end position="890"/>
    </location>
</feature>
<feature type="region of interest" description="Uridylyltransferase">
    <location>
        <begin position="1"/>
        <end position="349"/>
    </location>
</feature>
<feature type="region of interest" description="Uridylyl-removing">
    <location>
        <begin position="350"/>
        <end position="708"/>
    </location>
</feature>
<keyword id="KW-0378">Hydrolase</keyword>
<keyword id="KW-0460">Magnesium</keyword>
<keyword id="KW-0511">Multifunctional enzyme</keyword>
<keyword id="KW-0548">Nucleotidyltransferase</keyword>
<keyword id="KW-1185">Reference proteome</keyword>
<keyword id="KW-0677">Repeat</keyword>
<keyword id="KW-0808">Transferase</keyword>
<evidence type="ECO:0000255" key="1">
    <source>
        <dbReference type="HAMAP-Rule" id="MF_00277"/>
    </source>
</evidence>
<evidence type="ECO:0000255" key="2">
    <source>
        <dbReference type="PROSITE-ProRule" id="PRU01175"/>
    </source>
</evidence>